<gene>
    <name type="primary">PAN</name>
    <name type="ordered locus">At1g68640</name>
    <name type="ORF">F24J5.12</name>
</gene>
<proteinExistence type="evidence at protein level"/>
<evidence type="ECO:0000255" key="1">
    <source>
        <dbReference type="PROSITE-ProRule" id="PRU00978"/>
    </source>
</evidence>
<evidence type="ECO:0000255" key="2">
    <source>
        <dbReference type="PROSITE-ProRule" id="PRU01147"/>
    </source>
</evidence>
<evidence type="ECO:0000269" key="3">
    <source>
    </source>
</evidence>
<evidence type="ECO:0000269" key="4">
    <source>
    </source>
</evidence>
<evidence type="ECO:0000269" key="5">
    <source>
    </source>
</evidence>
<evidence type="ECO:0000269" key="6">
    <source>
    </source>
</evidence>
<evidence type="ECO:0000269" key="7">
    <source>
    </source>
</evidence>
<evidence type="ECO:0000269" key="8">
    <source>
    </source>
</evidence>
<evidence type="ECO:0000305" key="9"/>
<dbReference type="EMBL" id="AF111711">
    <property type="protein sequence ID" value="AAD19660.1"/>
    <property type="status" value="ALT_SEQ"/>
    <property type="molecule type" value="Genomic_DNA"/>
</dbReference>
<dbReference type="EMBL" id="AC008075">
    <property type="protein sequence ID" value="AAD49979.1"/>
    <property type="molecule type" value="Genomic_DNA"/>
</dbReference>
<dbReference type="EMBL" id="CP002684">
    <property type="protein sequence ID" value="AEE34822.1"/>
    <property type="molecule type" value="Genomic_DNA"/>
</dbReference>
<dbReference type="EMBL" id="AK118286">
    <property type="protein sequence ID" value="BAC42904.1"/>
    <property type="molecule type" value="mRNA"/>
</dbReference>
<dbReference type="EMBL" id="BT008586">
    <property type="protein sequence ID" value="AAP40413.1"/>
    <property type="molecule type" value="mRNA"/>
</dbReference>
<dbReference type="PIR" id="H96710">
    <property type="entry name" value="H96710"/>
</dbReference>
<dbReference type="RefSeq" id="NP_177031.1">
    <property type="nucleotide sequence ID" value="NM_105536.4"/>
</dbReference>
<dbReference type="SMR" id="Q9SX27"/>
<dbReference type="BioGRID" id="28415">
    <property type="interactions" value="3"/>
</dbReference>
<dbReference type="FunCoup" id="Q9SX27">
    <property type="interactions" value="292"/>
</dbReference>
<dbReference type="IntAct" id="Q9SX27">
    <property type="interactions" value="5"/>
</dbReference>
<dbReference type="STRING" id="3702.Q9SX27"/>
<dbReference type="PaxDb" id="3702-AT1G68640.1"/>
<dbReference type="ProteomicsDB" id="248659"/>
<dbReference type="EnsemblPlants" id="AT1G68640.1">
    <property type="protein sequence ID" value="AT1G68640.1"/>
    <property type="gene ID" value="AT1G68640"/>
</dbReference>
<dbReference type="GeneID" id="843194"/>
<dbReference type="Gramene" id="AT1G68640.1">
    <property type="protein sequence ID" value="AT1G68640.1"/>
    <property type="gene ID" value="AT1G68640"/>
</dbReference>
<dbReference type="KEGG" id="ath:AT1G68640"/>
<dbReference type="Araport" id="AT1G68640"/>
<dbReference type="TAIR" id="AT1G68640">
    <property type="gene designation" value="PAN"/>
</dbReference>
<dbReference type="eggNOG" id="ENOG502QWDU">
    <property type="taxonomic scope" value="Eukaryota"/>
</dbReference>
<dbReference type="HOGENOM" id="CLU_024782_1_3_1"/>
<dbReference type="InParanoid" id="Q9SX27"/>
<dbReference type="OMA" id="GDHGHSI"/>
<dbReference type="PhylomeDB" id="Q9SX27"/>
<dbReference type="PRO" id="PR:Q9SX27"/>
<dbReference type="Proteomes" id="UP000006548">
    <property type="component" value="Chromosome 1"/>
</dbReference>
<dbReference type="ExpressionAtlas" id="Q9SX27">
    <property type="expression patterns" value="baseline and differential"/>
</dbReference>
<dbReference type="GO" id="GO:0005634">
    <property type="term" value="C:nucleus"/>
    <property type="evidence" value="ECO:0000314"/>
    <property type="project" value="TAIR"/>
</dbReference>
<dbReference type="GO" id="GO:0000987">
    <property type="term" value="F:cis-regulatory region sequence-specific DNA binding"/>
    <property type="evidence" value="ECO:0000353"/>
    <property type="project" value="TAIR"/>
</dbReference>
<dbReference type="GO" id="GO:0003700">
    <property type="term" value="F:DNA-binding transcription factor activity"/>
    <property type="evidence" value="ECO:0000314"/>
    <property type="project" value="TAIR"/>
</dbReference>
<dbReference type="GO" id="GO:0000976">
    <property type="term" value="F:transcription cis-regulatory region binding"/>
    <property type="evidence" value="ECO:0000353"/>
    <property type="project" value="TAIR"/>
</dbReference>
<dbReference type="GO" id="GO:0006351">
    <property type="term" value="P:DNA-templated transcription"/>
    <property type="evidence" value="ECO:0007669"/>
    <property type="project" value="InterPro"/>
</dbReference>
<dbReference type="GO" id="GO:0009909">
    <property type="term" value="P:regulation of flower development"/>
    <property type="evidence" value="ECO:0000315"/>
    <property type="project" value="TAIR"/>
</dbReference>
<dbReference type="CDD" id="cd14708">
    <property type="entry name" value="bZIP_HBP1b-like"/>
    <property type="match status" value="1"/>
</dbReference>
<dbReference type="FunFam" id="1.20.5.170:FF:000019">
    <property type="entry name" value="BZIP family transcription factor"/>
    <property type="match status" value="1"/>
</dbReference>
<dbReference type="Gene3D" id="1.20.5.170">
    <property type="match status" value="1"/>
</dbReference>
<dbReference type="InterPro" id="IPR004827">
    <property type="entry name" value="bZIP"/>
</dbReference>
<dbReference type="InterPro" id="IPR046347">
    <property type="entry name" value="bZIP_sf"/>
</dbReference>
<dbReference type="InterPro" id="IPR025422">
    <property type="entry name" value="TGA_domain"/>
</dbReference>
<dbReference type="PANTHER" id="PTHR45693:SF1">
    <property type="entry name" value="TRANSCRIPTION FACTOR PERIANTHIA"/>
    <property type="match status" value="1"/>
</dbReference>
<dbReference type="PANTHER" id="PTHR45693">
    <property type="entry name" value="TRANSCRIPTION FACTOR TGA9"/>
    <property type="match status" value="1"/>
</dbReference>
<dbReference type="Pfam" id="PF00170">
    <property type="entry name" value="bZIP_1"/>
    <property type="match status" value="1"/>
</dbReference>
<dbReference type="Pfam" id="PF14144">
    <property type="entry name" value="DOG1"/>
    <property type="match status" value="1"/>
</dbReference>
<dbReference type="SMART" id="SM00338">
    <property type="entry name" value="BRLZ"/>
    <property type="match status" value="1"/>
</dbReference>
<dbReference type="SUPFAM" id="SSF57959">
    <property type="entry name" value="Leucine zipper domain"/>
    <property type="match status" value="1"/>
</dbReference>
<dbReference type="PROSITE" id="PS50217">
    <property type="entry name" value="BZIP"/>
    <property type="match status" value="1"/>
</dbReference>
<dbReference type="PROSITE" id="PS00036">
    <property type="entry name" value="BZIP_BASIC"/>
    <property type="match status" value="1"/>
</dbReference>
<dbReference type="PROSITE" id="PS51806">
    <property type="entry name" value="DOG1"/>
    <property type="match status" value="1"/>
</dbReference>
<protein>
    <recommendedName>
        <fullName>Transcription factor PERIANTHIA</fullName>
    </recommendedName>
    <alternativeName>
        <fullName>bZIP transcription factor 46</fullName>
        <shortName>AtbZIP46</shortName>
    </alternativeName>
</protein>
<reference key="1">
    <citation type="journal article" date="1999" name="Genes Dev.">
        <title>The PERIANTHIA gene encodes a bZIP protein involved in the determination of floral organ number in Arabidopsis thaliana.</title>
        <authorList>
            <person name="Chuang C.F."/>
            <person name="Running M.P."/>
            <person name="Williams R.W."/>
            <person name="Meyerowitz E.M."/>
        </authorList>
    </citation>
    <scope>NUCLEOTIDE SEQUENCE [GENOMIC DNA]</scope>
    <scope>DEVELOPMENTAL STAGE</scope>
    <scope>FUNCTION</scope>
    <scope>DISRUPTION PHENOTYPE</scope>
</reference>
<reference key="2">
    <citation type="journal article" date="2000" name="Nature">
        <title>Sequence and analysis of chromosome 1 of the plant Arabidopsis thaliana.</title>
        <authorList>
            <person name="Theologis A."/>
            <person name="Ecker J.R."/>
            <person name="Palm C.J."/>
            <person name="Federspiel N.A."/>
            <person name="Kaul S."/>
            <person name="White O."/>
            <person name="Alonso J."/>
            <person name="Altafi H."/>
            <person name="Araujo R."/>
            <person name="Bowman C.L."/>
            <person name="Brooks S.Y."/>
            <person name="Buehler E."/>
            <person name="Chan A."/>
            <person name="Chao Q."/>
            <person name="Chen H."/>
            <person name="Cheuk R.F."/>
            <person name="Chin C.W."/>
            <person name="Chung M.K."/>
            <person name="Conn L."/>
            <person name="Conway A.B."/>
            <person name="Conway A.R."/>
            <person name="Creasy T.H."/>
            <person name="Dewar K."/>
            <person name="Dunn P."/>
            <person name="Etgu P."/>
            <person name="Feldblyum T.V."/>
            <person name="Feng J.-D."/>
            <person name="Fong B."/>
            <person name="Fujii C.Y."/>
            <person name="Gill J.E."/>
            <person name="Goldsmith A.D."/>
            <person name="Haas B."/>
            <person name="Hansen N.F."/>
            <person name="Hughes B."/>
            <person name="Huizar L."/>
            <person name="Hunter J.L."/>
            <person name="Jenkins J."/>
            <person name="Johnson-Hopson C."/>
            <person name="Khan S."/>
            <person name="Khaykin E."/>
            <person name="Kim C.J."/>
            <person name="Koo H.L."/>
            <person name="Kremenetskaia I."/>
            <person name="Kurtz D.B."/>
            <person name="Kwan A."/>
            <person name="Lam B."/>
            <person name="Langin-Hooper S."/>
            <person name="Lee A."/>
            <person name="Lee J.M."/>
            <person name="Lenz C.A."/>
            <person name="Li J.H."/>
            <person name="Li Y.-P."/>
            <person name="Lin X."/>
            <person name="Liu S.X."/>
            <person name="Liu Z.A."/>
            <person name="Luros J.S."/>
            <person name="Maiti R."/>
            <person name="Marziali A."/>
            <person name="Militscher J."/>
            <person name="Miranda M."/>
            <person name="Nguyen M."/>
            <person name="Nierman W.C."/>
            <person name="Osborne B.I."/>
            <person name="Pai G."/>
            <person name="Peterson J."/>
            <person name="Pham P.K."/>
            <person name="Rizzo M."/>
            <person name="Rooney T."/>
            <person name="Rowley D."/>
            <person name="Sakano H."/>
            <person name="Salzberg S.L."/>
            <person name="Schwartz J.R."/>
            <person name="Shinn P."/>
            <person name="Southwick A.M."/>
            <person name="Sun H."/>
            <person name="Tallon L.J."/>
            <person name="Tambunga G."/>
            <person name="Toriumi M.J."/>
            <person name="Town C.D."/>
            <person name="Utterback T."/>
            <person name="Van Aken S."/>
            <person name="Vaysberg M."/>
            <person name="Vysotskaia V.S."/>
            <person name="Walker M."/>
            <person name="Wu D."/>
            <person name="Yu G."/>
            <person name="Fraser C.M."/>
            <person name="Venter J.C."/>
            <person name="Davis R.W."/>
        </authorList>
    </citation>
    <scope>NUCLEOTIDE SEQUENCE [LARGE SCALE GENOMIC DNA]</scope>
    <source>
        <strain>cv. Columbia</strain>
    </source>
</reference>
<reference key="3">
    <citation type="journal article" date="2017" name="Plant J.">
        <title>Araport11: a complete reannotation of the Arabidopsis thaliana reference genome.</title>
        <authorList>
            <person name="Cheng C.Y."/>
            <person name="Krishnakumar V."/>
            <person name="Chan A.P."/>
            <person name="Thibaud-Nissen F."/>
            <person name="Schobel S."/>
            <person name="Town C.D."/>
        </authorList>
    </citation>
    <scope>GENOME REANNOTATION</scope>
    <source>
        <strain>cv. Columbia</strain>
    </source>
</reference>
<reference key="4">
    <citation type="journal article" date="2002" name="Science">
        <title>Functional annotation of a full-length Arabidopsis cDNA collection.</title>
        <authorList>
            <person name="Seki M."/>
            <person name="Narusaka M."/>
            <person name="Kamiya A."/>
            <person name="Ishida J."/>
            <person name="Satou M."/>
            <person name="Sakurai T."/>
            <person name="Nakajima M."/>
            <person name="Enju A."/>
            <person name="Akiyama K."/>
            <person name="Oono Y."/>
            <person name="Muramatsu M."/>
            <person name="Hayashizaki Y."/>
            <person name="Kawai J."/>
            <person name="Carninci P."/>
            <person name="Itoh M."/>
            <person name="Ishii Y."/>
            <person name="Arakawa T."/>
            <person name="Shibata K."/>
            <person name="Shinagawa A."/>
            <person name="Shinozaki K."/>
        </authorList>
    </citation>
    <scope>NUCLEOTIDE SEQUENCE [LARGE SCALE MRNA]</scope>
    <source>
        <strain>cv. Columbia</strain>
    </source>
</reference>
<reference key="5">
    <citation type="journal article" date="2003" name="Science">
        <title>Empirical analysis of transcriptional activity in the Arabidopsis genome.</title>
        <authorList>
            <person name="Yamada K."/>
            <person name="Lim J."/>
            <person name="Dale J.M."/>
            <person name="Chen H."/>
            <person name="Shinn P."/>
            <person name="Palm C.J."/>
            <person name="Southwick A.M."/>
            <person name="Wu H.C."/>
            <person name="Kim C.J."/>
            <person name="Nguyen M."/>
            <person name="Pham P.K."/>
            <person name="Cheuk R.F."/>
            <person name="Karlin-Newmann G."/>
            <person name="Liu S.X."/>
            <person name="Lam B."/>
            <person name="Sakano H."/>
            <person name="Wu T."/>
            <person name="Yu G."/>
            <person name="Miranda M."/>
            <person name="Quach H.L."/>
            <person name="Tripp M."/>
            <person name="Chang C.H."/>
            <person name="Lee J.M."/>
            <person name="Toriumi M.J."/>
            <person name="Chan M.M."/>
            <person name="Tang C.C."/>
            <person name="Onodera C.S."/>
            <person name="Deng J.M."/>
            <person name="Akiyama K."/>
            <person name="Ansari Y."/>
            <person name="Arakawa T."/>
            <person name="Banh J."/>
            <person name="Banno F."/>
            <person name="Bowser L."/>
            <person name="Brooks S.Y."/>
            <person name="Carninci P."/>
            <person name="Chao Q."/>
            <person name="Choy N."/>
            <person name="Enju A."/>
            <person name="Goldsmith A.D."/>
            <person name="Gurjal M."/>
            <person name="Hansen N.F."/>
            <person name="Hayashizaki Y."/>
            <person name="Johnson-Hopson C."/>
            <person name="Hsuan V.W."/>
            <person name="Iida K."/>
            <person name="Karnes M."/>
            <person name="Khan S."/>
            <person name="Koesema E."/>
            <person name="Ishida J."/>
            <person name="Jiang P.X."/>
            <person name="Jones T."/>
            <person name="Kawai J."/>
            <person name="Kamiya A."/>
            <person name="Meyers C."/>
            <person name="Nakajima M."/>
            <person name="Narusaka M."/>
            <person name="Seki M."/>
            <person name="Sakurai T."/>
            <person name="Satou M."/>
            <person name="Tamse R."/>
            <person name="Vaysberg M."/>
            <person name="Wallender E.K."/>
            <person name="Wong C."/>
            <person name="Yamamura Y."/>
            <person name="Yuan S."/>
            <person name="Shinozaki K."/>
            <person name="Davis R.W."/>
            <person name="Theologis A."/>
            <person name="Ecker J.R."/>
        </authorList>
    </citation>
    <scope>NUCLEOTIDE SEQUENCE [LARGE SCALE MRNA]</scope>
    <source>
        <strain>cv. Columbia</strain>
    </source>
</reference>
<reference key="6">
    <citation type="journal article" date="1996" name="Development">
        <title>Mutations in the PERIANTHIA gene of Arabidopsis specifically alter floral organ number and initiation pattern.</title>
        <authorList>
            <person name="Running M.P."/>
            <person name="Meyerowitz E.M."/>
        </authorList>
    </citation>
    <scope>DISRUPTION PHENOTYPE</scope>
</reference>
<reference key="7">
    <citation type="journal article" date="2002" name="Trends Plant Sci.">
        <title>bZIP transcription factors in Arabidopsis.</title>
        <authorList>
            <person name="Jakoby M."/>
            <person name="Weisshaar B."/>
            <person name="Droege-Laser W."/>
            <person name="Vicente-Carbajosa J."/>
            <person name="Tiedemann J."/>
            <person name="Kroj T."/>
            <person name="Parcy F."/>
        </authorList>
    </citation>
    <scope>GENE FAMILY</scope>
    <scope>NOMENCLATURE</scope>
</reference>
<reference key="8">
    <citation type="journal article" date="2005" name="Plant Cell">
        <title>BLADE-ON-PETIOLE-dependent signaling controls leaf and floral patterning in Arabidopsis.</title>
        <authorList>
            <person name="Hepworth S.R."/>
            <person name="Zhang Y."/>
            <person name="McKim S."/>
            <person name="Li X."/>
            <person name="Haughn G.W."/>
        </authorList>
    </citation>
    <scope>INTERACTION WITH BOP1 AND BOP2</scope>
</reference>
<reference key="9">
    <citation type="journal article" date="2009" name="Development">
        <title>Floral stem cell termination involves the direct regulation of AGAMOUS by PERIANTHIA.</title>
        <authorList>
            <person name="Das P."/>
            <person name="Ito T."/>
            <person name="Wellmer F."/>
            <person name="Vernoux T."/>
            <person name="Dedieu A."/>
            <person name="Traas J."/>
            <person name="Meyerowitz E.M."/>
        </authorList>
    </citation>
    <scope>FUNCTION</scope>
</reference>
<reference key="10">
    <citation type="journal article" date="2009" name="Development">
        <title>Dual roles of the bZIP transcription factor PERIANTHIA in the control of floral architecture and homeotic gene expression.</title>
        <authorList>
            <person name="Maier A.T."/>
            <person name="Stehling-Sun S."/>
            <person name="Wollmann H."/>
            <person name="Demar M."/>
            <person name="Hong R.L."/>
            <person name="Haubeiss S."/>
            <person name="Weigel D."/>
            <person name="Lohmann J.U."/>
        </authorList>
    </citation>
    <scope>FUNCTION</scope>
</reference>
<reference key="11">
    <citation type="journal article" date="2009" name="Plant Cell">
        <title>Nuclear activity of ROXY1, a glutaredoxin interacting with TGA factors, is required for petal development in Arabidopsis thaliana.</title>
        <authorList>
            <person name="Li S."/>
            <person name="Lauri A."/>
            <person name="Ziemann M."/>
            <person name="Busch A."/>
            <person name="Bhave M."/>
            <person name="Zachgo S."/>
        </authorList>
    </citation>
    <scope>INTERACTION WITH GRXC7/ROXY1</scope>
    <scope>MUTAGENESIS OF CYS-340</scope>
</reference>
<accession>Q9SX27</accession>
<accession>Q9ZPJ6</accession>
<keyword id="KW-0010">Activator</keyword>
<keyword id="KW-0175">Coiled coil</keyword>
<keyword id="KW-0238">DNA-binding</keyword>
<keyword id="KW-0539">Nucleus</keyword>
<keyword id="KW-1185">Reference proteome</keyword>
<keyword id="KW-0804">Transcription</keyword>
<keyword id="KW-0805">Transcription regulation</keyword>
<comment type="function">
    <text evidence="5 6 8">Transcriptional activator involved in the determination of floral organ number. Acts to determine floral organ patterning by establishing floral organ primordia in specific numbers and positions. Plays a role in regulating stem cell fate by directly controlling AG expression. Binds to the 5'-AAGAAT-3' cis-acting element found in AG promoter. Might represent a target for a post-translational modification by GRXC7/ROXY1.</text>
</comment>
<comment type="subunit">
    <text evidence="3 4">Interacts with GRXC7/ROXY1. Interacts with BOP1 and BOP2.</text>
</comment>
<comment type="interaction">
    <interactant intactId="EBI-2257975">
        <id>Q9SX27</id>
    </interactant>
    <interactant intactId="EBI-2257898">
        <id>Q96305</id>
        <label>GRXC7</label>
    </interactant>
    <organismsDiffer>false</organismsDiffer>
    <experiments>3</experiments>
</comment>
<comment type="subcellular location">
    <subcellularLocation>
        <location evidence="1">Nucleus</location>
    </subcellularLocation>
</comment>
<comment type="developmental stage">
    <text evidence="8">Expressed in the apical meristem, the floral meristem, each whorl of organ primordia, and in ovule primordia during wild-type flower development.</text>
</comment>
<comment type="disruption phenotype">
    <text evidence="7 8">Mutant plants have extra floral organs. The modal numbers of organs in mutant flowers are 5 sepals, 5 petals, 5 stamens, and 2 carpels in contrast with the tetramerous pattern of the wild type.</text>
</comment>
<comment type="similarity">
    <text evidence="9">Belongs to the bZIP family.</text>
</comment>
<comment type="sequence caution" evidence="9">
    <conflict type="erroneous gene model prediction">
        <sequence resource="EMBL-CDS" id="AAD19660"/>
    </conflict>
</comment>
<name>PAN_ARATH</name>
<sequence>MQSSFKTVPFTPDFYSQSSYFFRGDSCLEEFHQPVNGFHHEEAIDLSPNVTIASANLHYTTFDTVMDCGGGGGGGLRERLEGGEEECLDTGQLVYQKGTRLVGGGVGEVNSSWCDSVSAMADNSQHTDTSTDIDTDDKTQLNGGHQGMLLATNCSDQSNVKSSDQRTLRRLAQNREAARKSRLRKKAYVQQLENSRIRLAQLEEELKRARQQGSLVERGVSADHTHLAAGNGVFSFELEYTRWKEEHQRMINDLRSGVNSQLGDNDLRVLVDAVMSHYDEIFRLKGIGTKVDVFHMLSGMWKTPAERFFMWLGGFRSSELLKILGNHVDPLTDQQLIGICNLQQSSQQAEDALSQGMEALQQSLLETLSSASMGPNSSANVADYMGHMAMAMGKLGTLENFLRQADLLRQQTLQQLHRILTTRQAARAFLVIHDYISRLRALSSLWLARPRD</sequence>
<feature type="chain" id="PRO_0000398152" description="Transcription factor PERIANTHIA">
    <location>
        <begin position="1"/>
        <end position="452"/>
    </location>
</feature>
<feature type="domain" description="bZIP" evidence="1">
    <location>
        <begin position="164"/>
        <end position="227"/>
    </location>
</feature>
<feature type="domain" description="DOG1" evidence="2">
    <location>
        <begin position="233"/>
        <end position="449"/>
    </location>
</feature>
<feature type="region of interest" description="Basic motif" evidence="1">
    <location>
        <begin position="166"/>
        <end position="186"/>
    </location>
</feature>
<feature type="region of interest" description="Leucine-zipper" evidence="1">
    <location>
        <begin position="192"/>
        <end position="206"/>
    </location>
</feature>
<feature type="mutagenesis site" description="Abolishes function in flower development." evidence="4">
    <original>C</original>
    <variation>A</variation>
    <location>
        <position position="340"/>
    </location>
</feature>
<organism>
    <name type="scientific">Arabidopsis thaliana</name>
    <name type="common">Mouse-ear cress</name>
    <dbReference type="NCBI Taxonomy" id="3702"/>
    <lineage>
        <taxon>Eukaryota</taxon>
        <taxon>Viridiplantae</taxon>
        <taxon>Streptophyta</taxon>
        <taxon>Embryophyta</taxon>
        <taxon>Tracheophyta</taxon>
        <taxon>Spermatophyta</taxon>
        <taxon>Magnoliopsida</taxon>
        <taxon>eudicotyledons</taxon>
        <taxon>Gunneridae</taxon>
        <taxon>Pentapetalae</taxon>
        <taxon>rosids</taxon>
        <taxon>malvids</taxon>
        <taxon>Brassicales</taxon>
        <taxon>Brassicaceae</taxon>
        <taxon>Camelineae</taxon>
        <taxon>Arabidopsis</taxon>
    </lineage>
</organism>